<organism>
    <name type="scientific">Uperoleia inundata</name>
    <name type="common">Floodplain toadlet</name>
    <dbReference type="NCBI Taxonomy" id="104953"/>
    <lineage>
        <taxon>Eukaryota</taxon>
        <taxon>Metazoa</taxon>
        <taxon>Chordata</taxon>
        <taxon>Craniata</taxon>
        <taxon>Vertebrata</taxon>
        <taxon>Euteleostomi</taxon>
        <taxon>Amphibia</taxon>
        <taxon>Batrachia</taxon>
        <taxon>Anura</taxon>
        <taxon>Neobatrachia</taxon>
        <taxon>Myobatrachoidea</taxon>
        <taxon>Myobatrachidae</taxon>
        <taxon>Myobatrachinae</taxon>
        <taxon>Uperoleia</taxon>
    </lineage>
</organism>
<dbReference type="GO" id="GO:0005576">
    <property type="term" value="C:extracellular region"/>
    <property type="evidence" value="ECO:0007669"/>
    <property type="project" value="UniProtKB-SubCell"/>
</dbReference>
<dbReference type="GO" id="GO:0042742">
    <property type="term" value="P:defense response to bacterium"/>
    <property type="evidence" value="ECO:0007669"/>
    <property type="project" value="UniProtKB-KW"/>
</dbReference>
<dbReference type="InterPro" id="IPR013157">
    <property type="entry name" value="Aurein_antimicrobial_peptide"/>
</dbReference>
<dbReference type="Pfam" id="PF08256">
    <property type="entry name" value="Antimicrobial20"/>
    <property type="match status" value="1"/>
</dbReference>
<proteinExistence type="evidence at protein level"/>
<protein>
    <recommendedName>
        <fullName>Uperin-2.2</fullName>
    </recommendedName>
</protein>
<reference key="1">
    <citation type="journal article" date="1996" name="Aust. J. Chem.">
        <title>Novel uperin peptides from the dorsal glands of the australian floodplain toadlet Uperoleia inundata.</title>
        <authorList>
            <person name="Bradford A.M."/>
            <person name="Raftery M.J."/>
            <person name="Bowie J.H."/>
            <person name="Tyler M.J."/>
            <person name="Wallace J.C."/>
            <person name="Adams G.W."/>
            <person name="Severini C."/>
        </authorList>
    </citation>
    <scope>PROTEIN SEQUENCE</scope>
    <scope>MASS SPECTROMETRY</scope>
    <source>
        <tissue>Skin secretion</tissue>
    </source>
</reference>
<keyword id="KW-0878">Amphibian defense peptide</keyword>
<keyword id="KW-0044">Antibiotic</keyword>
<keyword id="KW-0929">Antimicrobial</keyword>
<keyword id="KW-0903">Direct protein sequencing</keyword>
<keyword id="KW-0964">Secreted</keyword>
<name>UPE22_UPEIN</name>
<evidence type="ECO:0000269" key="1">
    <source ref="1"/>
</evidence>
<accession>P82028</accession>
<feature type="peptide" id="PRO_0000043847" description="Uperin-2.2">
    <location>
        <begin position="1"/>
        <end position="19"/>
    </location>
</feature>
<sequence length="19" mass="1927">GFVDLAKKVVGGIRNALGI</sequence>
<comment type="function">
    <text>Shows a weak antibacterial activity against B.cereus, E.coli, L.mesenteriodes, L.innocua, M.luteus, P.haemolytica, S.aureus and S.uberis.</text>
</comment>
<comment type="subcellular location">
    <subcellularLocation>
        <location>Secreted</location>
    </subcellularLocation>
</comment>
<comment type="tissue specificity">
    <text>Expressed by the skin dorsal glands.</text>
</comment>
<comment type="mass spectrometry" mass="1926.0" method="FAB" evidence="1"/>